<evidence type="ECO:0000255" key="1">
    <source>
        <dbReference type="HAMAP-Rule" id="MF_01044"/>
    </source>
</evidence>
<accession>B1JIR6</accession>
<proteinExistence type="inferred from homology"/>
<protein>
    <recommendedName>
        <fullName evidence="1">Protein TsgA homolog</fullName>
    </recommendedName>
</protein>
<reference key="1">
    <citation type="submission" date="2008-02" db="EMBL/GenBank/DDBJ databases">
        <title>Complete sequence of Yersinia pseudotuberculosis YPIII.</title>
        <authorList>
            <consortium name="US DOE Joint Genome Institute"/>
            <person name="Copeland A."/>
            <person name="Lucas S."/>
            <person name="Lapidus A."/>
            <person name="Glavina del Rio T."/>
            <person name="Dalin E."/>
            <person name="Tice H."/>
            <person name="Bruce D."/>
            <person name="Goodwin L."/>
            <person name="Pitluck S."/>
            <person name="Munk A.C."/>
            <person name="Brettin T."/>
            <person name="Detter J.C."/>
            <person name="Han C."/>
            <person name="Tapia R."/>
            <person name="Schmutz J."/>
            <person name="Larimer F."/>
            <person name="Land M."/>
            <person name="Hauser L."/>
            <person name="Challacombe J.F."/>
            <person name="Green L."/>
            <person name="Lindler L.E."/>
            <person name="Nikolich M.P."/>
            <person name="Richardson P."/>
        </authorList>
    </citation>
    <scope>NUCLEOTIDE SEQUENCE [LARGE SCALE GENOMIC DNA]</scope>
    <source>
        <strain>YPIII</strain>
    </source>
</reference>
<feature type="chain" id="PRO_1000136155" description="Protein TsgA homolog">
    <location>
        <begin position="1"/>
        <end position="394"/>
    </location>
</feature>
<feature type="transmembrane region" description="Helical" evidence="1">
    <location>
        <begin position="11"/>
        <end position="31"/>
    </location>
</feature>
<feature type="transmembrane region" description="Helical" evidence="1">
    <location>
        <begin position="51"/>
        <end position="71"/>
    </location>
</feature>
<feature type="transmembrane region" description="Helical" evidence="1">
    <location>
        <begin position="76"/>
        <end position="96"/>
    </location>
</feature>
<feature type="transmembrane region" description="Helical" evidence="1">
    <location>
        <begin position="101"/>
        <end position="121"/>
    </location>
</feature>
<feature type="transmembrane region" description="Helical" evidence="1">
    <location>
        <begin position="134"/>
        <end position="154"/>
    </location>
</feature>
<feature type="transmembrane region" description="Helical" evidence="1">
    <location>
        <begin position="162"/>
        <end position="182"/>
    </location>
</feature>
<feature type="transmembrane region" description="Helical" evidence="1">
    <location>
        <begin position="206"/>
        <end position="226"/>
    </location>
</feature>
<feature type="transmembrane region" description="Helical" evidence="1">
    <location>
        <begin position="246"/>
        <end position="266"/>
    </location>
</feature>
<feature type="transmembrane region" description="Helical" evidence="1">
    <location>
        <begin position="274"/>
        <end position="294"/>
    </location>
</feature>
<feature type="transmembrane region" description="Helical" evidence="1">
    <location>
        <begin position="302"/>
        <end position="322"/>
    </location>
</feature>
<feature type="transmembrane region" description="Helical" evidence="1">
    <location>
        <begin position="334"/>
        <end position="354"/>
    </location>
</feature>
<feature type="transmembrane region" description="Helical" evidence="1">
    <location>
        <begin position="363"/>
        <end position="383"/>
    </location>
</feature>
<gene>
    <name evidence="1" type="primary">tsgA</name>
    <name type="ordered locus">YPK_0238</name>
</gene>
<organism>
    <name type="scientific">Yersinia pseudotuberculosis serotype O:3 (strain YPIII)</name>
    <dbReference type="NCBI Taxonomy" id="502800"/>
    <lineage>
        <taxon>Bacteria</taxon>
        <taxon>Pseudomonadati</taxon>
        <taxon>Pseudomonadota</taxon>
        <taxon>Gammaproteobacteria</taxon>
        <taxon>Enterobacterales</taxon>
        <taxon>Yersiniaceae</taxon>
        <taxon>Yersinia</taxon>
    </lineage>
</organism>
<sequence length="394" mass="43653">MNNSNRIRLTWISYLSYALTGALVIVTGIVMGNIAEYFNLPIASMSNTFTFLNAGILISIFLNAWLMEIIPLKRQLVFGFILMLIAIAGLMVGHNLMIFSISMFIFGVVSGITMSIGTFLVTHMYEGRQRGSRLLFTDSFFSMAGMIFPIAAAMLLARHIEWYWVYACIGLLYVGIFVLTLCSEFPVLGHKATDQSKPVVKEKWGVGVLFLAIAALCYILGQLGFIQWVPEYATKTFNMNISQAGQLVSNFWISYMIGMWIFSFILRFFDLQRIVTVLAAMATLAMYLFVSTDNPAYLSYYILALGFVSSAIYTTLITLGSLQTKVSSPKLVNFILTCGTVGTMLTFVVTGPIVANNGVHAALETANGLYLAVFILCLALGFFTKHRSHGHVTH</sequence>
<dbReference type="EMBL" id="CP000950">
    <property type="protein sequence ID" value="ACA66551.1"/>
    <property type="molecule type" value="Genomic_DNA"/>
</dbReference>
<dbReference type="RefSeq" id="WP_002215690.1">
    <property type="nucleotide sequence ID" value="NZ_CP009792.1"/>
</dbReference>
<dbReference type="SMR" id="B1JIR6"/>
<dbReference type="GeneID" id="57974438"/>
<dbReference type="KEGG" id="ypy:YPK_0238"/>
<dbReference type="PATRIC" id="fig|502800.11.peg.844"/>
<dbReference type="GO" id="GO:0005886">
    <property type="term" value="C:plasma membrane"/>
    <property type="evidence" value="ECO:0007669"/>
    <property type="project" value="UniProtKB-SubCell"/>
</dbReference>
<dbReference type="GO" id="GO:0022857">
    <property type="term" value="F:transmembrane transporter activity"/>
    <property type="evidence" value="ECO:0007669"/>
    <property type="project" value="InterPro"/>
</dbReference>
<dbReference type="Gene3D" id="1.20.1250.20">
    <property type="entry name" value="MFS general substrate transporter like domains"/>
    <property type="match status" value="2"/>
</dbReference>
<dbReference type="HAMAP" id="MF_01044">
    <property type="entry name" value="MFS_TsgA"/>
    <property type="match status" value="1"/>
</dbReference>
<dbReference type="InterPro" id="IPR011701">
    <property type="entry name" value="MFS"/>
</dbReference>
<dbReference type="InterPro" id="IPR020846">
    <property type="entry name" value="MFS_dom"/>
</dbReference>
<dbReference type="InterPro" id="IPR036259">
    <property type="entry name" value="MFS_trans_sf"/>
</dbReference>
<dbReference type="InterPro" id="IPR023528">
    <property type="entry name" value="MFS_TsgA"/>
</dbReference>
<dbReference type="InterPro" id="IPR050375">
    <property type="entry name" value="MFS_TsgA-like"/>
</dbReference>
<dbReference type="NCBIfam" id="NF002982">
    <property type="entry name" value="PRK03699.1"/>
    <property type="match status" value="1"/>
</dbReference>
<dbReference type="PANTHER" id="PTHR43702">
    <property type="entry name" value="L-FUCOSE-PROTON SYMPORTER"/>
    <property type="match status" value="1"/>
</dbReference>
<dbReference type="PANTHER" id="PTHR43702:SF3">
    <property type="entry name" value="PROTEIN TSGA"/>
    <property type="match status" value="1"/>
</dbReference>
<dbReference type="Pfam" id="PF07690">
    <property type="entry name" value="MFS_1"/>
    <property type="match status" value="1"/>
</dbReference>
<dbReference type="SUPFAM" id="SSF103473">
    <property type="entry name" value="MFS general substrate transporter"/>
    <property type="match status" value="1"/>
</dbReference>
<dbReference type="PROSITE" id="PS50850">
    <property type="entry name" value="MFS"/>
    <property type="match status" value="1"/>
</dbReference>
<keyword id="KW-0997">Cell inner membrane</keyword>
<keyword id="KW-1003">Cell membrane</keyword>
<keyword id="KW-0472">Membrane</keyword>
<keyword id="KW-0812">Transmembrane</keyword>
<keyword id="KW-1133">Transmembrane helix</keyword>
<name>TSGA_YERPY</name>
<comment type="subcellular location">
    <subcellularLocation>
        <location evidence="1">Cell inner membrane</location>
        <topology evidence="1">Multi-pass membrane protein</topology>
    </subcellularLocation>
</comment>
<comment type="similarity">
    <text evidence="1">Belongs to the major facilitator superfamily. TsgA family.</text>
</comment>